<proteinExistence type="inferred from homology"/>
<feature type="chain" id="PRO_1000149305" description="2-isopropylmalate synthase">
    <location>
        <begin position="1"/>
        <end position="509"/>
    </location>
</feature>
<feature type="domain" description="Pyruvate carboxyltransferase" evidence="1">
    <location>
        <begin position="5"/>
        <end position="267"/>
    </location>
</feature>
<feature type="region of interest" description="Regulatory domain" evidence="1">
    <location>
        <begin position="391"/>
        <end position="509"/>
    </location>
</feature>
<feature type="binding site" evidence="1">
    <location>
        <position position="14"/>
    </location>
    <ligand>
        <name>Mn(2+)</name>
        <dbReference type="ChEBI" id="CHEBI:29035"/>
    </ligand>
</feature>
<feature type="binding site" evidence="1">
    <location>
        <position position="202"/>
    </location>
    <ligand>
        <name>Mn(2+)</name>
        <dbReference type="ChEBI" id="CHEBI:29035"/>
    </ligand>
</feature>
<feature type="binding site" evidence="1">
    <location>
        <position position="204"/>
    </location>
    <ligand>
        <name>Mn(2+)</name>
        <dbReference type="ChEBI" id="CHEBI:29035"/>
    </ligand>
</feature>
<feature type="binding site" evidence="1">
    <location>
        <position position="238"/>
    </location>
    <ligand>
        <name>Mn(2+)</name>
        <dbReference type="ChEBI" id="CHEBI:29035"/>
    </ligand>
</feature>
<sequence length="509" mass="55704">MSSHIQIFDTTLRDGEQTPGVNFTFDERLRIALQLEKWGVDVIEAGFPASSTGSFKSVQAIAQTLTTTAVCGLARCKKSDIDAVYEATKDAAKPVVHVFIATSPIHLEHKLKMSQEDVLASIKEHVTYAKQLFDVVQFSPEDATRTELPFLVKCVQTAVDAGATVINIPDTVGYSYHDEYAHIFKTLTESVTSSNEIIYSAHCHDDLGMAVSNSLAAIEGGARRIEGTVNGIGERAGNAALEEVALALYVRNDHYGAQTALNLEETKKTSDLISRYAGIRVPRNKAIVGQNAFSHESGIHQDGVLKHRETYEIMTPQLVGVSTTELPLGKLSGKHAFSEKLKALGYNIDKEAQIDLFKQFKTIADKKKSVSDRDIHAIIQGSEHEHQALYKLETLQLQYVSSGLQSAVVVVKDKEGHIYQDSSIGTGSIVAIYNAVDRIFQKETELIDYRINSVTEGTDAQAEVHVNLLIEGKTVNGFGIDHDILQASCKAYVEAHAKFAAENVEKVGN</sequence>
<keyword id="KW-0028">Amino-acid biosynthesis</keyword>
<keyword id="KW-0100">Branched-chain amino acid biosynthesis</keyword>
<keyword id="KW-0963">Cytoplasm</keyword>
<keyword id="KW-0432">Leucine biosynthesis</keyword>
<keyword id="KW-0464">Manganese</keyword>
<keyword id="KW-0479">Metal-binding</keyword>
<keyword id="KW-0808">Transferase</keyword>
<reference key="1">
    <citation type="submission" date="2007-05" db="EMBL/GenBank/DDBJ databases">
        <title>Complete sequence of chromosome of Staphylococcus aureus subsp. aureus JH9.</title>
        <authorList>
            <consortium name="US DOE Joint Genome Institute"/>
            <person name="Copeland A."/>
            <person name="Lucas S."/>
            <person name="Lapidus A."/>
            <person name="Barry K."/>
            <person name="Detter J.C."/>
            <person name="Glavina del Rio T."/>
            <person name="Hammon N."/>
            <person name="Israni S."/>
            <person name="Pitluck S."/>
            <person name="Chain P."/>
            <person name="Malfatti S."/>
            <person name="Shin M."/>
            <person name="Vergez L."/>
            <person name="Schmutz J."/>
            <person name="Larimer F."/>
            <person name="Land M."/>
            <person name="Hauser L."/>
            <person name="Kyrpides N."/>
            <person name="Kim E."/>
            <person name="Tomasz A."/>
            <person name="Richardson P."/>
        </authorList>
    </citation>
    <scope>NUCLEOTIDE SEQUENCE [LARGE SCALE GENOMIC DNA]</scope>
    <source>
        <strain>JH9</strain>
    </source>
</reference>
<dbReference type="EC" id="2.3.3.13" evidence="1"/>
<dbReference type="EMBL" id="CP000703">
    <property type="protein sequence ID" value="ABQ49876.1"/>
    <property type="molecule type" value="Genomic_DNA"/>
</dbReference>
<dbReference type="RefSeq" id="WP_000094583.1">
    <property type="nucleotide sequence ID" value="NC_009487.1"/>
</dbReference>
<dbReference type="SMR" id="A5IUK3"/>
<dbReference type="KEGG" id="saj:SaurJH9_2094"/>
<dbReference type="HOGENOM" id="CLU_022158_0_1_9"/>
<dbReference type="UniPathway" id="UPA00048">
    <property type="reaction ID" value="UER00070"/>
</dbReference>
<dbReference type="GO" id="GO:0005737">
    <property type="term" value="C:cytoplasm"/>
    <property type="evidence" value="ECO:0007669"/>
    <property type="project" value="UniProtKB-SubCell"/>
</dbReference>
<dbReference type="GO" id="GO:0003852">
    <property type="term" value="F:2-isopropylmalate synthase activity"/>
    <property type="evidence" value="ECO:0007669"/>
    <property type="project" value="UniProtKB-UniRule"/>
</dbReference>
<dbReference type="GO" id="GO:0003985">
    <property type="term" value="F:acetyl-CoA C-acetyltransferase activity"/>
    <property type="evidence" value="ECO:0007669"/>
    <property type="project" value="UniProtKB-UniRule"/>
</dbReference>
<dbReference type="GO" id="GO:0030145">
    <property type="term" value="F:manganese ion binding"/>
    <property type="evidence" value="ECO:0007669"/>
    <property type="project" value="UniProtKB-UniRule"/>
</dbReference>
<dbReference type="GO" id="GO:0009098">
    <property type="term" value="P:L-leucine biosynthetic process"/>
    <property type="evidence" value="ECO:0007669"/>
    <property type="project" value="UniProtKB-UniRule"/>
</dbReference>
<dbReference type="CDD" id="cd07940">
    <property type="entry name" value="DRE_TIM_IPMS"/>
    <property type="match status" value="1"/>
</dbReference>
<dbReference type="FunFam" id="1.10.238.260:FF:000001">
    <property type="entry name" value="2-isopropylmalate synthase"/>
    <property type="match status" value="1"/>
</dbReference>
<dbReference type="FunFam" id="3.20.20.70:FF:000010">
    <property type="entry name" value="2-isopropylmalate synthase"/>
    <property type="match status" value="1"/>
</dbReference>
<dbReference type="FunFam" id="3.30.160.270:FF:000003">
    <property type="entry name" value="2-isopropylmalate synthase"/>
    <property type="match status" value="1"/>
</dbReference>
<dbReference type="Gene3D" id="1.10.238.260">
    <property type="match status" value="1"/>
</dbReference>
<dbReference type="Gene3D" id="3.30.160.270">
    <property type="match status" value="1"/>
</dbReference>
<dbReference type="Gene3D" id="3.20.20.70">
    <property type="entry name" value="Aldolase class I"/>
    <property type="match status" value="1"/>
</dbReference>
<dbReference type="HAMAP" id="MF_01025">
    <property type="entry name" value="LeuA_type1"/>
    <property type="match status" value="1"/>
</dbReference>
<dbReference type="InterPro" id="IPR050073">
    <property type="entry name" value="2-IPM_HCS-like"/>
</dbReference>
<dbReference type="InterPro" id="IPR013709">
    <property type="entry name" value="2-isopropylmalate_synth_dimer"/>
</dbReference>
<dbReference type="InterPro" id="IPR013785">
    <property type="entry name" value="Aldolase_TIM"/>
</dbReference>
<dbReference type="InterPro" id="IPR054691">
    <property type="entry name" value="LeuA/HCS_post-cat"/>
</dbReference>
<dbReference type="InterPro" id="IPR036230">
    <property type="entry name" value="LeuA_allosteric_dom_sf"/>
</dbReference>
<dbReference type="InterPro" id="IPR005671">
    <property type="entry name" value="LeuA_bact_synth"/>
</dbReference>
<dbReference type="InterPro" id="IPR000891">
    <property type="entry name" value="PYR_CT"/>
</dbReference>
<dbReference type="NCBIfam" id="TIGR00973">
    <property type="entry name" value="leuA_bact"/>
    <property type="match status" value="1"/>
</dbReference>
<dbReference type="NCBIfam" id="NF002086">
    <property type="entry name" value="PRK00915.1-3"/>
    <property type="match status" value="1"/>
</dbReference>
<dbReference type="NCBIfam" id="NF002088">
    <property type="entry name" value="PRK00915.1-5"/>
    <property type="match status" value="1"/>
</dbReference>
<dbReference type="PANTHER" id="PTHR10277:SF9">
    <property type="entry name" value="2-ISOPROPYLMALATE SYNTHASE 1, CHLOROPLASTIC-RELATED"/>
    <property type="match status" value="1"/>
</dbReference>
<dbReference type="PANTHER" id="PTHR10277">
    <property type="entry name" value="HOMOCITRATE SYNTHASE-RELATED"/>
    <property type="match status" value="1"/>
</dbReference>
<dbReference type="Pfam" id="PF22617">
    <property type="entry name" value="HCS_D2"/>
    <property type="match status" value="1"/>
</dbReference>
<dbReference type="Pfam" id="PF00682">
    <property type="entry name" value="HMGL-like"/>
    <property type="match status" value="1"/>
</dbReference>
<dbReference type="Pfam" id="PF08502">
    <property type="entry name" value="LeuA_dimer"/>
    <property type="match status" value="1"/>
</dbReference>
<dbReference type="SMART" id="SM00917">
    <property type="entry name" value="LeuA_dimer"/>
    <property type="match status" value="1"/>
</dbReference>
<dbReference type="SUPFAM" id="SSF110921">
    <property type="entry name" value="2-isopropylmalate synthase LeuA, allosteric (dimerisation) domain"/>
    <property type="match status" value="1"/>
</dbReference>
<dbReference type="SUPFAM" id="SSF51569">
    <property type="entry name" value="Aldolase"/>
    <property type="match status" value="1"/>
</dbReference>
<dbReference type="PROSITE" id="PS50991">
    <property type="entry name" value="PYR_CT"/>
    <property type="match status" value="1"/>
</dbReference>
<accession>A5IUK3</accession>
<name>LEU1_STAA9</name>
<evidence type="ECO:0000255" key="1">
    <source>
        <dbReference type="HAMAP-Rule" id="MF_01025"/>
    </source>
</evidence>
<organism>
    <name type="scientific">Staphylococcus aureus (strain JH9)</name>
    <dbReference type="NCBI Taxonomy" id="359786"/>
    <lineage>
        <taxon>Bacteria</taxon>
        <taxon>Bacillati</taxon>
        <taxon>Bacillota</taxon>
        <taxon>Bacilli</taxon>
        <taxon>Bacillales</taxon>
        <taxon>Staphylococcaceae</taxon>
        <taxon>Staphylococcus</taxon>
    </lineage>
</organism>
<comment type="function">
    <text evidence="1">Catalyzes the condensation of the acetyl group of acetyl-CoA with 3-methyl-2-oxobutanoate (2-ketoisovalerate) to form 3-carboxy-3-hydroxy-4-methylpentanoate (2-isopropylmalate).</text>
</comment>
<comment type="catalytic activity">
    <reaction evidence="1">
        <text>3-methyl-2-oxobutanoate + acetyl-CoA + H2O = (2S)-2-isopropylmalate + CoA + H(+)</text>
        <dbReference type="Rhea" id="RHEA:21524"/>
        <dbReference type="ChEBI" id="CHEBI:1178"/>
        <dbReference type="ChEBI" id="CHEBI:11851"/>
        <dbReference type="ChEBI" id="CHEBI:15377"/>
        <dbReference type="ChEBI" id="CHEBI:15378"/>
        <dbReference type="ChEBI" id="CHEBI:57287"/>
        <dbReference type="ChEBI" id="CHEBI:57288"/>
        <dbReference type="EC" id="2.3.3.13"/>
    </reaction>
</comment>
<comment type="cofactor">
    <cofactor evidence="1">
        <name>Mn(2+)</name>
        <dbReference type="ChEBI" id="CHEBI:29035"/>
    </cofactor>
</comment>
<comment type="pathway">
    <text evidence="1">Amino-acid biosynthesis; L-leucine biosynthesis; L-leucine from 3-methyl-2-oxobutanoate: step 1/4.</text>
</comment>
<comment type="subunit">
    <text evidence="1">Homodimer.</text>
</comment>
<comment type="subcellular location">
    <subcellularLocation>
        <location evidence="1">Cytoplasm</location>
    </subcellularLocation>
</comment>
<comment type="similarity">
    <text evidence="1">Belongs to the alpha-IPM synthase/homocitrate synthase family. LeuA type 1 subfamily.</text>
</comment>
<gene>
    <name evidence="1" type="primary">leuA</name>
    <name type="ordered locus">SaurJH9_2094</name>
</gene>
<protein>
    <recommendedName>
        <fullName evidence="1">2-isopropylmalate synthase</fullName>
        <ecNumber evidence="1">2.3.3.13</ecNumber>
    </recommendedName>
    <alternativeName>
        <fullName evidence="1">Alpha-IPM synthase</fullName>
    </alternativeName>
    <alternativeName>
        <fullName evidence="1">Alpha-isopropylmalate synthase</fullName>
    </alternativeName>
</protein>